<comment type="function">
    <text evidence="1">Catalyzes the synthesis of GMP from XMP.</text>
</comment>
<comment type="catalytic activity">
    <reaction evidence="1">
        <text>XMP + L-glutamine + ATP + H2O = GMP + L-glutamate + AMP + diphosphate + 2 H(+)</text>
        <dbReference type="Rhea" id="RHEA:11680"/>
        <dbReference type="ChEBI" id="CHEBI:15377"/>
        <dbReference type="ChEBI" id="CHEBI:15378"/>
        <dbReference type="ChEBI" id="CHEBI:29985"/>
        <dbReference type="ChEBI" id="CHEBI:30616"/>
        <dbReference type="ChEBI" id="CHEBI:33019"/>
        <dbReference type="ChEBI" id="CHEBI:57464"/>
        <dbReference type="ChEBI" id="CHEBI:58115"/>
        <dbReference type="ChEBI" id="CHEBI:58359"/>
        <dbReference type="ChEBI" id="CHEBI:456215"/>
        <dbReference type="EC" id="6.3.5.2"/>
    </reaction>
</comment>
<comment type="pathway">
    <text evidence="1">Purine metabolism; GMP biosynthesis; GMP from XMP (L-Gln route): step 1/1.</text>
</comment>
<comment type="subunit">
    <text evidence="1">Homodimer.</text>
</comment>
<protein>
    <recommendedName>
        <fullName evidence="1">GMP synthase [glutamine-hydrolyzing]</fullName>
        <ecNumber evidence="1">6.3.5.2</ecNumber>
    </recommendedName>
    <alternativeName>
        <fullName evidence="1">GMP synthetase</fullName>
    </alternativeName>
    <alternativeName>
        <fullName evidence="1">Glutamine amidotransferase</fullName>
    </alternativeName>
</protein>
<proteinExistence type="inferred from homology"/>
<reference key="1">
    <citation type="journal article" date="2009" name="J. Bacteriol.">
        <title>Complete genome sequence and comparative genome analysis of enteropathogenic Escherichia coli O127:H6 strain E2348/69.</title>
        <authorList>
            <person name="Iguchi A."/>
            <person name="Thomson N.R."/>
            <person name="Ogura Y."/>
            <person name="Saunders D."/>
            <person name="Ooka T."/>
            <person name="Henderson I.R."/>
            <person name="Harris D."/>
            <person name="Asadulghani M."/>
            <person name="Kurokawa K."/>
            <person name="Dean P."/>
            <person name="Kenny B."/>
            <person name="Quail M.A."/>
            <person name="Thurston S."/>
            <person name="Dougan G."/>
            <person name="Hayashi T."/>
            <person name="Parkhill J."/>
            <person name="Frankel G."/>
        </authorList>
    </citation>
    <scope>NUCLEOTIDE SEQUENCE [LARGE SCALE GENOMIC DNA]</scope>
    <source>
        <strain>E2348/69 / EPEC</strain>
    </source>
</reference>
<organism>
    <name type="scientific">Escherichia coli O127:H6 (strain E2348/69 / EPEC)</name>
    <dbReference type="NCBI Taxonomy" id="574521"/>
    <lineage>
        <taxon>Bacteria</taxon>
        <taxon>Pseudomonadati</taxon>
        <taxon>Pseudomonadota</taxon>
        <taxon>Gammaproteobacteria</taxon>
        <taxon>Enterobacterales</taxon>
        <taxon>Enterobacteriaceae</taxon>
        <taxon>Escherichia</taxon>
    </lineage>
</organism>
<sequence length="525" mass="58679">MTENIHKHRILILDFGSQYTQLVARRVRELGVYCELWAWDVTEAQIRDFNPSGIILSGGPESTTEENSPRAPQYVFEAGVPVFGICYGMQTMAMQLGGHVEASNEREFGYAQVEVVNDSALVRGIEDALTADGKPLLDVWMSHGDKVTAIPSDFVTVASTESCPFAIMANEEKRFYGVQFHPEVTHTRQGMRMLERFVRDICQCEALWTPAKIIDDAVARIREQVGDDKVILGLSGGVDSSVTAMLLHRAIGKNLTCVFVDNGLLRLNEAEQVLDMFGDHFGLNIVHVPAEDRFLSALAGENDPEAKRKIIGRVFVEVFDEEALKLEDVKWLAQGTIYPDVIESAASATGKAHVIKSHHNVGGLPKEMKMGLVEPLKELFKDEVRKIGLELGLPYDMLYRHPFPGPGLGVRVLGEVKKEYCDLLRRADAIFIEELRKADLYDKVSQAFTVFLPVRSVGVMGDGRKYDWVVSLRAVETIDFMTAHWAHLPYDFLGRVSNRIINEVNGISRVVYDISGKPPATIEWE</sequence>
<gene>
    <name evidence="1" type="primary">guaA</name>
    <name type="ordered locus">E2348C_2782</name>
</gene>
<dbReference type="EC" id="6.3.5.2" evidence="1"/>
<dbReference type="EMBL" id="FM180568">
    <property type="protein sequence ID" value="CAS10330.1"/>
    <property type="molecule type" value="Genomic_DNA"/>
</dbReference>
<dbReference type="RefSeq" id="WP_000138264.1">
    <property type="nucleotide sequence ID" value="NC_011601.1"/>
</dbReference>
<dbReference type="SMR" id="B7UGU5"/>
<dbReference type="MEROPS" id="C26.957"/>
<dbReference type="KEGG" id="ecg:E2348C_2782"/>
<dbReference type="HOGENOM" id="CLU_014340_0_5_6"/>
<dbReference type="UniPathway" id="UPA00189">
    <property type="reaction ID" value="UER00296"/>
</dbReference>
<dbReference type="Proteomes" id="UP000008205">
    <property type="component" value="Chromosome"/>
</dbReference>
<dbReference type="GO" id="GO:0005829">
    <property type="term" value="C:cytosol"/>
    <property type="evidence" value="ECO:0007669"/>
    <property type="project" value="TreeGrafter"/>
</dbReference>
<dbReference type="GO" id="GO:0005524">
    <property type="term" value="F:ATP binding"/>
    <property type="evidence" value="ECO:0007669"/>
    <property type="project" value="UniProtKB-UniRule"/>
</dbReference>
<dbReference type="GO" id="GO:0003921">
    <property type="term" value="F:GMP synthase activity"/>
    <property type="evidence" value="ECO:0007669"/>
    <property type="project" value="InterPro"/>
</dbReference>
<dbReference type="CDD" id="cd01742">
    <property type="entry name" value="GATase1_GMP_Synthase"/>
    <property type="match status" value="1"/>
</dbReference>
<dbReference type="CDD" id="cd01997">
    <property type="entry name" value="GMP_synthase_C"/>
    <property type="match status" value="1"/>
</dbReference>
<dbReference type="FunFam" id="3.30.300.10:FF:000002">
    <property type="entry name" value="GMP synthase [glutamine-hydrolyzing]"/>
    <property type="match status" value="1"/>
</dbReference>
<dbReference type="FunFam" id="3.40.50.620:FF:000001">
    <property type="entry name" value="GMP synthase [glutamine-hydrolyzing]"/>
    <property type="match status" value="1"/>
</dbReference>
<dbReference type="FunFam" id="3.40.50.880:FF:000001">
    <property type="entry name" value="GMP synthase [glutamine-hydrolyzing]"/>
    <property type="match status" value="1"/>
</dbReference>
<dbReference type="Gene3D" id="3.30.300.10">
    <property type="match status" value="1"/>
</dbReference>
<dbReference type="Gene3D" id="3.40.50.880">
    <property type="match status" value="1"/>
</dbReference>
<dbReference type="Gene3D" id="3.40.50.620">
    <property type="entry name" value="HUPs"/>
    <property type="match status" value="1"/>
</dbReference>
<dbReference type="HAMAP" id="MF_00344">
    <property type="entry name" value="GMP_synthase"/>
    <property type="match status" value="1"/>
</dbReference>
<dbReference type="InterPro" id="IPR029062">
    <property type="entry name" value="Class_I_gatase-like"/>
</dbReference>
<dbReference type="InterPro" id="IPR017926">
    <property type="entry name" value="GATASE"/>
</dbReference>
<dbReference type="InterPro" id="IPR001674">
    <property type="entry name" value="GMP_synth_C"/>
</dbReference>
<dbReference type="InterPro" id="IPR004739">
    <property type="entry name" value="GMP_synth_GATase"/>
</dbReference>
<dbReference type="InterPro" id="IPR022955">
    <property type="entry name" value="GMP_synthase"/>
</dbReference>
<dbReference type="InterPro" id="IPR025777">
    <property type="entry name" value="GMPS_ATP_PPase_dom"/>
</dbReference>
<dbReference type="InterPro" id="IPR022310">
    <property type="entry name" value="NAD/GMP_synthase"/>
</dbReference>
<dbReference type="InterPro" id="IPR014729">
    <property type="entry name" value="Rossmann-like_a/b/a_fold"/>
</dbReference>
<dbReference type="NCBIfam" id="TIGR00884">
    <property type="entry name" value="guaA_Cterm"/>
    <property type="match status" value="1"/>
</dbReference>
<dbReference type="NCBIfam" id="TIGR00888">
    <property type="entry name" value="guaA_Nterm"/>
    <property type="match status" value="1"/>
</dbReference>
<dbReference type="NCBIfam" id="NF000848">
    <property type="entry name" value="PRK00074.1"/>
    <property type="match status" value="1"/>
</dbReference>
<dbReference type="PANTHER" id="PTHR11922:SF2">
    <property type="entry name" value="GMP SYNTHASE [GLUTAMINE-HYDROLYZING]"/>
    <property type="match status" value="1"/>
</dbReference>
<dbReference type="PANTHER" id="PTHR11922">
    <property type="entry name" value="GMP SYNTHASE-RELATED"/>
    <property type="match status" value="1"/>
</dbReference>
<dbReference type="Pfam" id="PF00117">
    <property type="entry name" value="GATase"/>
    <property type="match status" value="1"/>
</dbReference>
<dbReference type="Pfam" id="PF00958">
    <property type="entry name" value="GMP_synt_C"/>
    <property type="match status" value="1"/>
</dbReference>
<dbReference type="Pfam" id="PF02540">
    <property type="entry name" value="NAD_synthase"/>
    <property type="match status" value="1"/>
</dbReference>
<dbReference type="PRINTS" id="PR00097">
    <property type="entry name" value="ANTSNTHASEII"/>
</dbReference>
<dbReference type="PRINTS" id="PR00099">
    <property type="entry name" value="CPSGATASE"/>
</dbReference>
<dbReference type="PRINTS" id="PR00096">
    <property type="entry name" value="GATASE"/>
</dbReference>
<dbReference type="SUPFAM" id="SSF52402">
    <property type="entry name" value="Adenine nucleotide alpha hydrolases-like"/>
    <property type="match status" value="1"/>
</dbReference>
<dbReference type="SUPFAM" id="SSF52317">
    <property type="entry name" value="Class I glutamine amidotransferase-like"/>
    <property type="match status" value="1"/>
</dbReference>
<dbReference type="SUPFAM" id="SSF54810">
    <property type="entry name" value="GMP synthetase C-terminal dimerisation domain"/>
    <property type="match status" value="1"/>
</dbReference>
<dbReference type="PROSITE" id="PS51273">
    <property type="entry name" value="GATASE_TYPE_1"/>
    <property type="match status" value="1"/>
</dbReference>
<dbReference type="PROSITE" id="PS51553">
    <property type="entry name" value="GMPS_ATP_PPASE"/>
    <property type="match status" value="1"/>
</dbReference>
<name>GUAA_ECO27</name>
<evidence type="ECO:0000255" key="1">
    <source>
        <dbReference type="HAMAP-Rule" id="MF_00344"/>
    </source>
</evidence>
<feature type="chain" id="PRO_1000190237" description="GMP synthase [glutamine-hydrolyzing]">
    <location>
        <begin position="1"/>
        <end position="525"/>
    </location>
</feature>
<feature type="domain" description="Glutamine amidotransferase type-1" evidence="1">
    <location>
        <begin position="9"/>
        <end position="207"/>
    </location>
</feature>
<feature type="domain" description="GMPS ATP-PPase" evidence="1">
    <location>
        <begin position="208"/>
        <end position="400"/>
    </location>
</feature>
<feature type="active site" description="Nucleophile" evidence="1">
    <location>
        <position position="86"/>
    </location>
</feature>
<feature type="active site" evidence="1">
    <location>
        <position position="181"/>
    </location>
</feature>
<feature type="active site" evidence="1">
    <location>
        <position position="183"/>
    </location>
</feature>
<feature type="binding site" evidence="1">
    <location>
        <begin position="235"/>
        <end position="241"/>
    </location>
    <ligand>
        <name>ATP</name>
        <dbReference type="ChEBI" id="CHEBI:30616"/>
    </ligand>
</feature>
<keyword id="KW-0067">ATP-binding</keyword>
<keyword id="KW-0315">Glutamine amidotransferase</keyword>
<keyword id="KW-0332">GMP biosynthesis</keyword>
<keyword id="KW-0436">Ligase</keyword>
<keyword id="KW-0547">Nucleotide-binding</keyword>
<keyword id="KW-0658">Purine biosynthesis</keyword>
<keyword id="KW-1185">Reference proteome</keyword>
<accession>B7UGU5</accession>